<reference key="1">
    <citation type="submission" date="2001-06" db="EMBL/GenBank/DDBJ databases">
        <title>Isolation of full-length cDNA clones from macaque brain cDNA libraries.</title>
        <authorList>
            <person name="Osada N."/>
            <person name="Hida M."/>
            <person name="Kusuda J."/>
            <person name="Tanuma R."/>
            <person name="Iseki K."/>
            <person name="Hirai M."/>
            <person name="Terao K."/>
            <person name="Suzuki Y."/>
            <person name="Sugano S."/>
            <person name="Hashimoto K."/>
        </authorList>
    </citation>
    <scope>NUCLEOTIDE SEQUENCE [LARGE SCALE MRNA]</scope>
    <source>
        <tissue>Frontal cortex</tissue>
        <tissue>Medulla oblongata</tissue>
    </source>
</reference>
<comment type="function">
    <text evidence="1">Plays an important role in the processing of non-canonical mitochondrial mRNA precursors.</text>
</comment>
<comment type="subunit">
    <text evidence="1">Found in a complex with GRSF1, DDX28, DHX30 and FASTKD2. Associates with the 12S mitochondrial rRNA (12S mt-rRNA).</text>
</comment>
<comment type="subcellular location">
    <subcellularLocation>
        <location evidence="1">Mitochondrion matrix</location>
        <location evidence="1">Mitochondrion nucleoid</location>
    </subcellularLocation>
    <text evidence="1">Localizes to mitochondrial RNA granules found in close proximity to the mitochondrial nucleoids.</text>
</comment>
<comment type="similarity">
    <text evidence="3">Belongs to the FAST kinase family.</text>
</comment>
<comment type="sequence caution" evidence="3">
    <conflict type="frameshift">
        <sequence resource="EMBL-CDS" id="BAB21934"/>
    </conflict>
</comment>
<keyword id="KW-0007">Acetylation</keyword>
<keyword id="KW-0496">Mitochondrion</keyword>
<keyword id="KW-1135">Mitochondrion nucleoid</keyword>
<keyword id="KW-0507">mRNA processing</keyword>
<keyword id="KW-0597">Phosphoprotein</keyword>
<keyword id="KW-1185">Reference proteome</keyword>
<keyword id="KW-0694">RNA-binding</keyword>
<keyword id="KW-0699">rRNA-binding</keyword>
<keyword id="KW-0809">Transit peptide</keyword>
<proteinExistence type="evidence at transcript level"/>
<gene>
    <name type="primary">FASTKD5</name>
    <name type="ORF">QflA-14044</name>
    <name type="ORF">QmoA-10101</name>
</gene>
<evidence type="ECO:0000250" key="1">
    <source>
        <dbReference type="UniProtKB" id="Q7L8L6"/>
    </source>
</evidence>
<evidence type="ECO:0000255" key="2">
    <source>
        <dbReference type="PROSITE-ProRule" id="PRU00619"/>
    </source>
</evidence>
<evidence type="ECO:0000305" key="3"/>
<dbReference type="EMBL" id="AB062957">
    <property type="protein sequence ID" value="BAB60739.1"/>
    <property type="molecule type" value="mRNA"/>
</dbReference>
<dbReference type="EMBL" id="AB055309">
    <property type="protein sequence ID" value="BAB21934.1"/>
    <property type="status" value="ALT_FRAME"/>
    <property type="molecule type" value="mRNA"/>
</dbReference>
<dbReference type="RefSeq" id="XP_015313326.2">
    <property type="nucleotide sequence ID" value="XM_015457840.3"/>
</dbReference>
<dbReference type="RefSeq" id="XP_065378923.1">
    <property type="nucleotide sequence ID" value="XM_065522851.1"/>
</dbReference>
<dbReference type="SMR" id="Q95KD0"/>
<dbReference type="GeneID" id="102121223"/>
<dbReference type="KEGG" id="mcf:102121223"/>
<dbReference type="CTD" id="60493"/>
<dbReference type="eggNOG" id="ENOG502QRPY">
    <property type="taxonomic scope" value="Eukaryota"/>
</dbReference>
<dbReference type="Proteomes" id="UP000233100">
    <property type="component" value="Unplaced"/>
</dbReference>
<dbReference type="GO" id="GO:0042645">
    <property type="term" value="C:mitochondrial nucleoid"/>
    <property type="evidence" value="ECO:0000250"/>
    <property type="project" value="UniProtKB"/>
</dbReference>
<dbReference type="GO" id="GO:0035770">
    <property type="term" value="C:ribonucleoprotein granule"/>
    <property type="evidence" value="ECO:0000250"/>
    <property type="project" value="UniProtKB"/>
</dbReference>
<dbReference type="GO" id="GO:0019843">
    <property type="term" value="F:rRNA binding"/>
    <property type="evidence" value="ECO:0000250"/>
    <property type="project" value="UniProtKB"/>
</dbReference>
<dbReference type="GO" id="GO:0000963">
    <property type="term" value="P:mitochondrial RNA processing"/>
    <property type="evidence" value="ECO:0000250"/>
    <property type="project" value="UniProtKB"/>
</dbReference>
<dbReference type="GO" id="GO:0006397">
    <property type="term" value="P:mRNA processing"/>
    <property type="evidence" value="ECO:0007669"/>
    <property type="project" value="UniProtKB-KW"/>
</dbReference>
<dbReference type="GO" id="GO:0044528">
    <property type="term" value="P:regulation of mitochondrial mRNA stability"/>
    <property type="evidence" value="ECO:0007669"/>
    <property type="project" value="InterPro"/>
</dbReference>
<dbReference type="InterPro" id="IPR013579">
    <property type="entry name" value="FAST_2"/>
</dbReference>
<dbReference type="InterPro" id="IPR050870">
    <property type="entry name" value="FAST_kinase"/>
</dbReference>
<dbReference type="InterPro" id="IPR010622">
    <property type="entry name" value="FAST_Leu-rich"/>
</dbReference>
<dbReference type="InterPro" id="IPR013584">
    <property type="entry name" value="RAP"/>
</dbReference>
<dbReference type="PANTHER" id="PTHR21228:SF70">
    <property type="entry name" value="FAST KINASE DOMAIN-CONTAINING PROTEIN 5, MITOCHONDRIAL"/>
    <property type="match status" value="1"/>
</dbReference>
<dbReference type="PANTHER" id="PTHR21228">
    <property type="entry name" value="FAST LEU-RICH DOMAIN-CONTAINING"/>
    <property type="match status" value="1"/>
</dbReference>
<dbReference type="Pfam" id="PF06743">
    <property type="entry name" value="FAST_1"/>
    <property type="match status" value="1"/>
</dbReference>
<dbReference type="Pfam" id="PF08368">
    <property type="entry name" value="FAST_2"/>
    <property type="match status" value="1"/>
</dbReference>
<dbReference type="Pfam" id="PF08373">
    <property type="entry name" value="RAP"/>
    <property type="match status" value="1"/>
</dbReference>
<dbReference type="SMART" id="SM00952">
    <property type="entry name" value="RAP"/>
    <property type="match status" value="1"/>
</dbReference>
<dbReference type="PROSITE" id="PS51286">
    <property type="entry name" value="RAP"/>
    <property type="match status" value="1"/>
</dbReference>
<name>FAKD5_MACFA</name>
<organism>
    <name type="scientific">Macaca fascicularis</name>
    <name type="common">Crab-eating macaque</name>
    <name type="synonym">Cynomolgus monkey</name>
    <dbReference type="NCBI Taxonomy" id="9541"/>
    <lineage>
        <taxon>Eukaryota</taxon>
        <taxon>Metazoa</taxon>
        <taxon>Chordata</taxon>
        <taxon>Craniata</taxon>
        <taxon>Vertebrata</taxon>
        <taxon>Euteleostomi</taxon>
        <taxon>Mammalia</taxon>
        <taxon>Eutheria</taxon>
        <taxon>Euarchontoglires</taxon>
        <taxon>Primates</taxon>
        <taxon>Haplorrhini</taxon>
        <taxon>Catarrhini</taxon>
        <taxon>Cercopithecidae</taxon>
        <taxon>Cercopithecinae</taxon>
        <taxon>Macaca</taxon>
    </lineage>
</organism>
<accession>Q95KD0</accession>
<accession>Q9BGU7</accession>
<sequence length="764" mass="86621">MAATLKSLKLLRYRALCSPSACGAARSVSYWNVSSKQHGGQDPPEHISLCHSAKRVKNICSTFSSRRILTTSSACPGLEFSKTSSSKASTLQLDSPRATRVDEEDVEVFDSFANIRVFLQLRPEYRVHSYNASETSQLLSVSESELILHKVTVYQNKLQAQVIVDYLCKLSSLPAEQHPVLLRSTSFALLCQLSVKKIQLFDTQDLINVLKAFVILGIPHSHSMLDVYETKCCHQVWEMSMDQLLLVADLWRYLGRKIPRFLNIFSSYLNLHWKDLSLSQLVHLIYVIGENRQVSQDLMQKLESLILKYIDLINLEEVGTICLGFFKSKTSLSEFVMRKIGDLACANMQHLSSHALVNIVKMFRFTHVDHINFMKQLGEIAPQRIPSLGVQGVMHLTLYCSALRFLDEGVMNAVAASLPCRVAHCRSKDVAKILWSFGTLNYKPPNAEEFYSSLINEIHRKMPEFNQYPEHLPTCLLGLAFSEYFPVELIDFALSPGFVRLAQERTKFNLIKELYTLDGTVGIECPDYRGNRLSTHLQQEGSEFLWNLAEKDMNSKPEFLETLFLLETMLGGPQYVKHHMILPHTRSSDLEVQLDVNLKPLPFNREATPAENVATLRLKHVGVSLTDDLMNQLLKGKARGHFQGKTESEPGQQPMELENKAAVPLGGFLCNVADKSGAMEMAGLCPSACMQTPGMKLAIQFTNRNQYCYGSRDLLGLHSMKRRQLARLGYRVVELSYWEWFPLLKRTRLEKLAFLHEKVFTSAL</sequence>
<feature type="transit peptide" description="Mitochondrion" evidence="3">
    <location>
        <begin position="1"/>
        <end status="unknown"/>
    </location>
</feature>
<feature type="chain" id="PRO_0000284980" description="FAST kinase domain-containing protein 5, mitochondrial">
    <location>
        <begin status="unknown"/>
        <end position="764"/>
    </location>
</feature>
<feature type="domain" description="RAP" evidence="2">
    <location>
        <begin position="697"/>
        <end position="757"/>
    </location>
</feature>
<feature type="modified residue" description="Phosphoserine" evidence="1">
    <location>
        <position position="95"/>
    </location>
</feature>
<feature type="modified residue" description="N6-acetyllysine" evidence="1">
    <location>
        <position position="507"/>
    </location>
</feature>
<feature type="sequence conflict" description="In Ref. 1; BAB21934." evidence="3" ref="1">
    <original>K</original>
    <variation>E</variation>
    <location>
        <position position="745"/>
    </location>
</feature>
<protein>
    <recommendedName>
        <fullName>FAST kinase domain-containing protein 5, mitochondrial</fullName>
    </recommendedName>
</protein>